<name>PSBF_THEVB</name>
<evidence type="ECO:0000255" key="1">
    <source>
        <dbReference type="HAMAP-Rule" id="MF_00643"/>
    </source>
</evidence>
<evidence type="ECO:0000269" key="2">
    <source>
    </source>
</evidence>
<evidence type="ECO:0000269" key="3">
    <source>
    </source>
</evidence>
<evidence type="ECO:0000269" key="4">
    <source>
    </source>
</evidence>
<evidence type="ECO:0000269" key="5">
    <source>
    </source>
</evidence>
<evidence type="ECO:0000269" key="6">
    <source>
    </source>
</evidence>
<evidence type="ECO:0000269" key="7">
    <source>
    </source>
</evidence>
<evidence type="ECO:0000269" key="8">
    <source>
    </source>
</evidence>
<evidence type="ECO:0000269" key="9">
    <source>
    </source>
</evidence>
<evidence type="ECO:0000269" key="10">
    <source>
    </source>
</evidence>
<evidence type="ECO:0000269" key="11">
    <source>
    </source>
</evidence>
<evidence type="ECO:0000269" key="12">
    <source>
    </source>
</evidence>
<evidence type="ECO:0000269" key="13">
    <source>
    </source>
</evidence>
<evidence type="ECO:0000269" key="14">
    <source>
    </source>
</evidence>
<evidence type="ECO:0000269" key="15">
    <source ref="3"/>
</evidence>
<evidence type="ECO:0000303" key="16">
    <source>
    </source>
</evidence>
<evidence type="ECO:0000303" key="17">
    <source>
    </source>
</evidence>
<evidence type="ECO:0000303" key="18">
    <source>
    </source>
</evidence>
<evidence type="ECO:0000303" key="19">
    <source>
    </source>
</evidence>
<evidence type="ECO:0000303" key="20">
    <source>
    </source>
</evidence>
<evidence type="ECO:0000303" key="21">
    <source>
    </source>
</evidence>
<evidence type="ECO:0000303" key="22">
    <source>
    </source>
</evidence>
<evidence type="ECO:0000303" key="23">
    <source>
    </source>
</evidence>
<evidence type="ECO:0000303" key="24">
    <source ref="3"/>
</evidence>
<evidence type="ECO:0007744" key="25">
    <source>
        <dbReference type="PDB" id="7NHO"/>
    </source>
</evidence>
<evidence type="ECO:0007744" key="26">
    <source>
        <dbReference type="PDB" id="7NHP"/>
    </source>
</evidence>
<evidence type="ECO:0007744" key="27">
    <source>
        <dbReference type="PDB" id="7NHQ"/>
    </source>
</evidence>
<evidence type="ECO:0007829" key="28">
    <source>
        <dbReference type="PDB" id="1W5C"/>
    </source>
</evidence>
<evidence type="ECO:0007829" key="29">
    <source>
        <dbReference type="PDB" id="7YQ2"/>
    </source>
</evidence>
<comment type="function">
    <text evidence="1 7 8 12">This b-type cytochrome is tightly associated with the reaction center of photosystem II (PSII). PSII is a light-driven water:plastoquinone oxidoreductase that uses light energy to abstract electrons from H(2)O, generating O(2) and a proton gradient subsequently used for ATP formation. It consists of a core antenna complex that captures photons, and an electron transfer chain that converts photonic excitation into a charge separation.</text>
</comment>
<comment type="cofactor">
    <cofactor evidence="1">
        <name>heme b</name>
        <dbReference type="ChEBI" id="CHEBI:60344"/>
    </cofactor>
    <text evidence="1 2 3 4 5 7 8 9 10 11 12 13 15">With its partner (PsbE) binds heme. PSII binds additional chlorophylls, carotenoids and specific lipids.</text>
</comment>
<comment type="subunit">
    <text evidence="1 2 5 7 8 9 10 11 12 13 14 15">Heterodimer of an alpha subunit and a beta subunit. PSII is composed of 1 copy each of membrane proteins PsbA, PsbB, PsbC, PsbD, PsbE, PsbF, PsbH, PsbI, PsbJ, PsbK, PsbL, PsbM, PsbT, PsbX, PsbY, PsbZ, Psb30/Ycf12, peripheral proteins PsbO, CyanoQ (PsbQ), PsbU, PsbV and a large number of cofactors. It forms dimeric complexes. Part of a photosystem II (PSII) assembly intermediate complex PSII-I; crystallized from a strain deleted of psbJ, it forms monomeric PSII before addition of the oxygen evolving complex. PSII-I includes 3 assembly factors not found in mature PSII (Psb27, Psb28 and Psb34) (PubMed:33846594).</text>
</comment>
<comment type="subcellular location">
    <subcellularLocation>
        <location evidence="1 2 5 6 7 8 9 10 11 12 13 14 15">Cellular thylakoid membrane</location>
        <topology evidence="1 2 5 6 7 8 9 10 11 12 13 14 15">Single-pass membrane protein</topology>
    </subcellularLocation>
</comment>
<comment type="mass spectrometry"/>
<comment type="mass spectrometry"/>
<comment type="similarity">
    <text evidence="1">Belongs to the PsbE/PsbF family.</text>
</comment>
<dbReference type="EMBL" id="BA000039">
    <property type="protein sequence ID" value="BAC09094.1"/>
    <property type="molecule type" value="Genomic_DNA"/>
</dbReference>
<dbReference type="RefSeq" id="NP_682332.1">
    <property type="nucleotide sequence ID" value="NC_004113.1"/>
</dbReference>
<dbReference type="RefSeq" id="WP_011057382.1">
    <property type="nucleotide sequence ID" value="NC_004113.1"/>
</dbReference>
<dbReference type="PDB" id="1S5L">
    <property type="method" value="X-ray"/>
    <property type="resolution" value="3.50 A"/>
    <property type="chains" value="F/f=1-45"/>
</dbReference>
<dbReference type="PDB" id="1W5C">
    <property type="method" value="X-ray"/>
    <property type="resolution" value="3.20 A"/>
    <property type="chains" value="F/L=2-45"/>
</dbReference>
<dbReference type="PDB" id="2AXT">
    <property type="method" value="X-ray"/>
    <property type="resolution" value="3.00 A"/>
    <property type="chains" value="F/f=1-45"/>
</dbReference>
<dbReference type="PDB" id="3KZI">
    <property type="method" value="X-ray"/>
    <property type="resolution" value="3.60 A"/>
    <property type="chains" value="F=2-45"/>
</dbReference>
<dbReference type="PDB" id="4FBY">
    <property type="method" value="X-ray"/>
    <property type="resolution" value="6.56 A"/>
    <property type="chains" value="F/S=2-45"/>
</dbReference>
<dbReference type="PDB" id="4IXQ">
    <property type="method" value="X-ray"/>
    <property type="resolution" value="5.70 A"/>
    <property type="chains" value="F/f=1-45"/>
</dbReference>
<dbReference type="PDB" id="4IXR">
    <property type="method" value="X-ray"/>
    <property type="resolution" value="5.90 A"/>
    <property type="chains" value="F/f=1-45"/>
</dbReference>
<dbReference type="PDB" id="4PBU">
    <property type="method" value="X-ray"/>
    <property type="resolution" value="5.00 A"/>
    <property type="chains" value="F/f=12-45"/>
</dbReference>
<dbReference type="PDB" id="4PJ0">
    <property type="method" value="X-ray"/>
    <property type="resolution" value="2.44 A"/>
    <property type="chains" value="F/f=1-45"/>
</dbReference>
<dbReference type="PDB" id="4RVY">
    <property type="method" value="X-ray"/>
    <property type="resolution" value="5.50 A"/>
    <property type="chains" value="F/f=12-45"/>
</dbReference>
<dbReference type="PDB" id="4TNH">
    <property type="method" value="X-ray"/>
    <property type="resolution" value="4.90 A"/>
    <property type="chains" value="F/f=1-45"/>
</dbReference>
<dbReference type="PDB" id="4TNI">
    <property type="method" value="X-ray"/>
    <property type="resolution" value="4.60 A"/>
    <property type="chains" value="F/f=1-45"/>
</dbReference>
<dbReference type="PDB" id="4TNJ">
    <property type="method" value="X-ray"/>
    <property type="resolution" value="4.50 A"/>
    <property type="chains" value="F/f=1-45"/>
</dbReference>
<dbReference type="PDB" id="4TNK">
    <property type="method" value="X-ray"/>
    <property type="resolution" value="5.20 A"/>
    <property type="chains" value="F/f=1-45"/>
</dbReference>
<dbReference type="PDB" id="4V62">
    <property type="method" value="X-ray"/>
    <property type="resolution" value="2.90 A"/>
    <property type="chains" value="AF/BF=1-45"/>
</dbReference>
<dbReference type="PDB" id="4V82">
    <property type="method" value="X-ray"/>
    <property type="resolution" value="3.20 A"/>
    <property type="chains" value="AF/BF=1-45"/>
</dbReference>
<dbReference type="PDB" id="5E79">
    <property type="method" value="X-ray"/>
    <property type="resolution" value="3.50 A"/>
    <property type="chains" value="F/f=12-45"/>
</dbReference>
<dbReference type="PDB" id="5E7C">
    <property type="method" value="X-ray"/>
    <property type="resolution" value="4.50 A"/>
    <property type="chains" value="F/f=12-45"/>
</dbReference>
<dbReference type="PDB" id="5H2F">
    <property type="method" value="X-ray"/>
    <property type="resolution" value="2.20 A"/>
    <property type="chains" value="F/f=13-45"/>
</dbReference>
<dbReference type="PDB" id="5KAF">
    <property type="method" value="X-ray"/>
    <property type="resolution" value="3.00 A"/>
    <property type="chains" value="F/f=1-45"/>
</dbReference>
<dbReference type="PDB" id="5KAI">
    <property type="method" value="X-ray"/>
    <property type="resolution" value="2.80 A"/>
    <property type="chains" value="F/f=1-45"/>
</dbReference>
<dbReference type="PDB" id="5MX2">
    <property type="method" value="X-ray"/>
    <property type="resolution" value="2.20 A"/>
    <property type="chains" value="F/f=1-45"/>
</dbReference>
<dbReference type="PDB" id="5TIS">
    <property type="method" value="X-ray"/>
    <property type="resolution" value="2.25 A"/>
    <property type="chains" value="F/f=1-45"/>
</dbReference>
<dbReference type="PDB" id="5ZZN">
    <property type="method" value="X-ray"/>
    <property type="resolution" value="2.10 A"/>
    <property type="chains" value="F/f=12-45"/>
</dbReference>
<dbReference type="PDB" id="6DHE">
    <property type="method" value="X-ray"/>
    <property type="resolution" value="2.05 A"/>
    <property type="chains" value="F/f=12-45"/>
</dbReference>
<dbReference type="PDB" id="6DHF">
    <property type="method" value="X-ray"/>
    <property type="resolution" value="2.08 A"/>
    <property type="chains" value="F/f=12-45"/>
</dbReference>
<dbReference type="PDB" id="6DHG">
    <property type="method" value="X-ray"/>
    <property type="resolution" value="2.50 A"/>
    <property type="chains" value="F/f=12-45"/>
</dbReference>
<dbReference type="PDB" id="6DHH">
    <property type="method" value="X-ray"/>
    <property type="resolution" value="2.20 A"/>
    <property type="chains" value="F/f=12-45"/>
</dbReference>
<dbReference type="PDB" id="6DHO">
    <property type="method" value="X-ray"/>
    <property type="resolution" value="2.07 A"/>
    <property type="chains" value="F/f=12-45"/>
</dbReference>
<dbReference type="PDB" id="6DHP">
    <property type="method" value="X-ray"/>
    <property type="resolution" value="2.04 A"/>
    <property type="chains" value="F/f=12-45"/>
</dbReference>
<dbReference type="PDB" id="6W1O">
    <property type="method" value="X-ray"/>
    <property type="resolution" value="2.08 A"/>
    <property type="chains" value="F/f=1-45"/>
</dbReference>
<dbReference type="PDB" id="6W1P">
    <property type="method" value="X-ray"/>
    <property type="resolution" value="2.26 A"/>
    <property type="chains" value="F/f=1-45"/>
</dbReference>
<dbReference type="PDB" id="6W1Q">
    <property type="method" value="X-ray"/>
    <property type="resolution" value="2.27 A"/>
    <property type="chains" value="F/f=1-45"/>
</dbReference>
<dbReference type="PDB" id="6W1R">
    <property type="method" value="X-ray"/>
    <property type="resolution" value="2.23 A"/>
    <property type="chains" value="F/f=1-45"/>
</dbReference>
<dbReference type="PDB" id="6W1T">
    <property type="method" value="X-ray"/>
    <property type="resolution" value="2.01 A"/>
    <property type="chains" value="F/f=1-45"/>
</dbReference>
<dbReference type="PDB" id="6W1U">
    <property type="method" value="X-ray"/>
    <property type="resolution" value="2.09 A"/>
    <property type="chains" value="F/f=1-45"/>
</dbReference>
<dbReference type="PDB" id="6W1V">
    <property type="method" value="X-ray"/>
    <property type="resolution" value="2.09 A"/>
    <property type="chains" value="F/f=1-45"/>
</dbReference>
<dbReference type="PDB" id="7NHO">
    <property type="method" value="EM"/>
    <property type="resolution" value="2.66 A"/>
    <property type="chains" value="F=1-45"/>
</dbReference>
<dbReference type="PDB" id="7NHP">
    <property type="method" value="EM"/>
    <property type="resolution" value="2.72 A"/>
    <property type="chains" value="F=1-45"/>
</dbReference>
<dbReference type="PDB" id="7NHQ">
    <property type="method" value="EM"/>
    <property type="resolution" value="2.68 A"/>
    <property type="chains" value="F=1-45"/>
</dbReference>
<dbReference type="PDB" id="7RF1">
    <property type="method" value="X-ray"/>
    <property type="resolution" value="1.89 A"/>
    <property type="chains" value="F/f=1-45"/>
</dbReference>
<dbReference type="PDB" id="7RF2">
    <property type="method" value="X-ray"/>
    <property type="resolution" value="2.08 A"/>
    <property type="chains" value="F/f=1-45"/>
</dbReference>
<dbReference type="PDB" id="7RF3">
    <property type="method" value="X-ray"/>
    <property type="resolution" value="2.26 A"/>
    <property type="chains" value="F/f=1-45"/>
</dbReference>
<dbReference type="PDB" id="7RF4">
    <property type="method" value="X-ray"/>
    <property type="resolution" value="2.27 A"/>
    <property type="chains" value="F/f=1-45"/>
</dbReference>
<dbReference type="PDB" id="7RF5">
    <property type="method" value="X-ray"/>
    <property type="resolution" value="2.23 A"/>
    <property type="chains" value="F/f=1-45"/>
</dbReference>
<dbReference type="PDB" id="7RF6">
    <property type="method" value="X-ray"/>
    <property type="resolution" value="2.01 A"/>
    <property type="chains" value="F/f=1-45"/>
</dbReference>
<dbReference type="PDB" id="7RF7">
    <property type="method" value="X-ray"/>
    <property type="resolution" value="2.09 A"/>
    <property type="chains" value="F/f=1-45"/>
</dbReference>
<dbReference type="PDB" id="7RF8">
    <property type="method" value="X-ray"/>
    <property type="resolution" value="2.09 A"/>
    <property type="chains" value="F/f=1-45"/>
</dbReference>
<dbReference type="PDB" id="7YQ2">
    <property type="method" value="X-ray"/>
    <property type="resolution" value="1.90 A"/>
    <property type="chains" value="F/f=1-45"/>
</dbReference>
<dbReference type="PDB" id="7YQ7">
    <property type="method" value="X-ray"/>
    <property type="resolution" value="1.90 A"/>
    <property type="chains" value="F/f=1-45"/>
</dbReference>
<dbReference type="PDB" id="8EZ5">
    <property type="method" value="X-ray"/>
    <property type="resolution" value="2.09 A"/>
    <property type="chains" value="F/f=1-45"/>
</dbReference>
<dbReference type="PDB" id="8F4C">
    <property type="method" value="X-ray"/>
    <property type="resolution" value="2.00 A"/>
    <property type="chains" value="F/f=1-45"/>
</dbReference>
<dbReference type="PDB" id="8F4D">
    <property type="method" value="X-ray"/>
    <property type="resolution" value="2.15 A"/>
    <property type="chains" value="F/f=1-45"/>
</dbReference>
<dbReference type="PDB" id="8F4E">
    <property type="method" value="X-ray"/>
    <property type="resolution" value="2.09 A"/>
    <property type="chains" value="F/f=1-45"/>
</dbReference>
<dbReference type="PDB" id="8F4F">
    <property type="method" value="X-ray"/>
    <property type="resolution" value="2.03 A"/>
    <property type="chains" value="F/f=1-45"/>
</dbReference>
<dbReference type="PDB" id="8F4G">
    <property type="method" value="X-ray"/>
    <property type="resolution" value="2.03 A"/>
    <property type="chains" value="F/f=1-45"/>
</dbReference>
<dbReference type="PDB" id="8F4H">
    <property type="method" value="X-ray"/>
    <property type="resolution" value="2.10 A"/>
    <property type="chains" value="F/f=1-45"/>
</dbReference>
<dbReference type="PDB" id="8F4I">
    <property type="method" value="X-ray"/>
    <property type="resolution" value="2.00 A"/>
    <property type="chains" value="F/f=1-45"/>
</dbReference>
<dbReference type="PDB" id="8F4J">
    <property type="method" value="X-ray"/>
    <property type="resolution" value="2.00 A"/>
    <property type="chains" value="F/f=1-45"/>
</dbReference>
<dbReference type="PDB" id="8F4K">
    <property type="method" value="X-ray"/>
    <property type="resolution" value="2.16 A"/>
    <property type="chains" value="F/f=1-45"/>
</dbReference>
<dbReference type="PDB" id="9EVX">
    <property type="method" value="EM"/>
    <property type="resolution" value="1.71 A"/>
    <property type="chains" value="F/f=1-45"/>
</dbReference>
<dbReference type="PDBsum" id="1S5L"/>
<dbReference type="PDBsum" id="1W5C"/>
<dbReference type="PDBsum" id="2AXT"/>
<dbReference type="PDBsum" id="3KZI"/>
<dbReference type="PDBsum" id="4FBY"/>
<dbReference type="PDBsum" id="4IXQ"/>
<dbReference type="PDBsum" id="4IXR"/>
<dbReference type="PDBsum" id="4PBU"/>
<dbReference type="PDBsum" id="4PJ0"/>
<dbReference type="PDBsum" id="4RVY"/>
<dbReference type="PDBsum" id="4TNH"/>
<dbReference type="PDBsum" id="4TNI"/>
<dbReference type="PDBsum" id="4TNJ"/>
<dbReference type="PDBsum" id="4TNK"/>
<dbReference type="PDBsum" id="4V62"/>
<dbReference type="PDBsum" id="4V82"/>
<dbReference type="PDBsum" id="5E79"/>
<dbReference type="PDBsum" id="5E7C"/>
<dbReference type="PDBsum" id="5H2F"/>
<dbReference type="PDBsum" id="5KAF"/>
<dbReference type="PDBsum" id="5KAI"/>
<dbReference type="PDBsum" id="5MX2"/>
<dbReference type="PDBsum" id="5TIS"/>
<dbReference type="PDBsum" id="5ZZN"/>
<dbReference type="PDBsum" id="6DHE"/>
<dbReference type="PDBsum" id="6DHF"/>
<dbReference type="PDBsum" id="6DHG"/>
<dbReference type="PDBsum" id="6DHH"/>
<dbReference type="PDBsum" id="6DHO"/>
<dbReference type="PDBsum" id="6DHP"/>
<dbReference type="PDBsum" id="6W1O"/>
<dbReference type="PDBsum" id="6W1P"/>
<dbReference type="PDBsum" id="6W1Q"/>
<dbReference type="PDBsum" id="6W1R"/>
<dbReference type="PDBsum" id="6W1T"/>
<dbReference type="PDBsum" id="6W1U"/>
<dbReference type="PDBsum" id="6W1V"/>
<dbReference type="PDBsum" id="7NHO"/>
<dbReference type="PDBsum" id="7NHP"/>
<dbReference type="PDBsum" id="7NHQ"/>
<dbReference type="PDBsum" id="7RF1"/>
<dbReference type="PDBsum" id="7RF2"/>
<dbReference type="PDBsum" id="7RF3"/>
<dbReference type="PDBsum" id="7RF4"/>
<dbReference type="PDBsum" id="7RF5"/>
<dbReference type="PDBsum" id="7RF6"/>
<dbReference type="PDBsum" id="7RF7"/>
<dbReference type="PDBsum" id="7RF8"/>
<dbReference type="PDBsum" id="7YQ2"/>
<dbReference type="PDBsum" id="7YQ7"/>
<dbReference type="PDBsum" id="8EZ5"/>
<dbReference type="PDBsum" id="8F4C"/>
<dbReference type="PDBsum" id="8F4D"/>
<dbReference type="PDBsum" id="8F4E"/>
<dbReference type="PDBsum" id="8F4F"/>
<dbReference type="PDBsum" id="8F4G"/>
<dbReference type="PDBsum" id="8F4H"/>
<dbReference type="PDBsum" id="8F4I"/>
<dbReference type="PDBsum" id="8F4J"/>
<dbReference type="PDBsum" id="8F4K"/>
<dbReference type="PDBsum" id="9EVX"/>
<dbReference type="EMDB" id="EMD-12335"/>
<dbReference type="EMDB" id="EMD-12336"/>
<dbReference type="EMDB" id="EMD-12337"/>
<dbReference type="EMDB" id="EMD-50019"/>
<dbReference type="SMR" id="Q8DIN9"/>
<dbReference type="DIP" id="DIP-48492N"/>
<dbReference type="IntAct" id="Q8DIN9">
    <property type="interactions" value="1"/>
</dbReference>
<dbReference type="STRING" id="197221.gene:10748143"/>
<dbReference type="iPTMnet" id="Q8DIN9"/>
<dbReference type="EnsemblBacteria" id="BAC09094">
    <property type="protein sequence ID" value="BAC09094"/>
    <property type="gene ID" value="BAC09094"/>
</dbReference>
<dbReference type="KEGG" id="tel:tsr1542"/>
<dbReference type="PATRIC" id="fig|197221.4.peg.1618"/>
<dbReference type="eggNOG" id="ENOG50332KX">
    <property type="taxonomic scope" value="Bacteria"/>
</dbReference>
<dbReference type="EvolutionaryTrace" id="Q8DIN9"/>
<dbReference type="Proteomes" id="UP000000440">
    <property type="component" value="Chromosome"/>
</dbReference>
<dbReference type="GO" id="GO:0009539">
    <property type="term" value="C:photosystem II reaction center"/>
    <property type="evidence" value="ECO:0007669"/>
    <property type="project" value="InterPro"/>
</dbReference>
<dbReference type="GO" id="GO:0031676">
    <property type="term" value="C:plasma membrane-derived thylakoid membrane"/>
    <property type="evidence" value="ECO:0007669"/>
    <property type="project" value="UniProtKB-SubCell"/>
</dbReference>
<dbReference type="GO" id="GO:0009055">
    <property type="term" value="F:electron transfer activity"/>
    <property type="evidence" value="ECO:0007669"/>
    <property type="project" value="UniProtKB-UniRule"/>
</dbReference>
<dbReference type="GO" id="GO:0020037">
    <property type="term" value="F:heme binding"/>
    <property type="evidence" value="ECO:0007669"/>
    <property type="project" value="InterPro"/>
</dbReference>
<dbReference type="GO" id="GO:0005506">
    <property type="term" value="F:iron ion binding"/>
    <property type="evidence" value="ECO:0007669"/>
    <property type="project" value="UniProtKB-UniRule"/>
</dbReference>
<dbReference type="GO" id="GO:0009767">
    <property type="term" value="P:photosynthetic electron transport chain"/>
    <property type="evidence" value="ECO:0007669"/>
    <property type="project" value="InterPro"/>
</dbReference>
<dbReference type="HAMAP" id="MF_00643">
    <property type="entry name" value="PSII_PsbF"/>
    <property type="match status" value="1"/>
</dbReference>
<dbReference type="InterPro" id="IPR006241">
    <property type="entry name" value="PSII_cyt_b559_bsu"/>
</dbReference>
<dbReference type="InterPro" id="IPR006216">
    <property type="entry name" value="PSII_cyt_b559_CS"/>
</dbReference>
<dbReference type="InterPro" id="IPR013081">
    <property type="entry name" value="PSII_cyt_b559_N"/>
</dbReference>
<dbReference type="NCBIfam" id="TIGR01333">
    <property type="entry name" value="cyt_b559_beta"/>
    <property type="match status" value="1"/>
</dbReference>
<dbReference type="Pfam" id="PF00283">
    <property type="entry name" value="Cytochrom_B559"/>
    <property type="match status" value="1"/>
</dbReference>
<dbReference type="PIRSF" id="PIRSF000037">
    <property type="entry name" value="PsbF"/>
    <property type="match status" value="1"/>
</dbReference>
<dbReference type="SUPFAM" id="SSF161045">
    <property type="entry name" value="Cytochrome b559 subunits"/>
    <property type="match status" value="1"/>
</dbReference>
<dbReference type="PROSITE" id="PS00537">
    <property type="entry name" value="CYTOCHROME_B559"/>
    <property type="match status" value="1"/>
</dbReference>
<protein>
    <recommendedName>
        <fullName evidence="1">Cytochrome b559 subunit beta</fullName>
    </recommendedName>
    <alternativeName>
        <fullName evidence="1">PSII reaction center subunit VI</fullName>
    </alternativeName>
</protein>
<accession>Q8DIN9</accession>
<feature type="initiator methionine" description="Removed" evidence="6 7 8">
    <location>
        <position position="1"/>
    </location>
</feature>
<feature type="chain" id="PRO_0000200472" description="Cytochrome b559 subunit beta">
    <location>
        <begin position="2"/>
        <end position="45"/>
    </location>
</feature>
<feature type="topological domain" description="Cytoplasmic" evidence="14 27">
    <location>
        <begin position="2"/>
        <end position="17"/>
    </location>
</feature>
<feature type="transmembrane region" description="Helical" evidence="14 27">
    <location>
        <begin position="18"/>
        <end position="42"/>
    </location>
</feature>
<feature type="topological domain" description="Lumenal" evidence="14 27">
    <location>
        <begin position="43"/>
        <end position="45"/>
    </location>
</feature>
<feature type="binding site" description="axial binding residue" evidence="1 5 7 16 17 18 19 20 21 22 23 24">
    <location>
        <position position="24"/>
    </location>
    <ligand>
        <name>heme</name>
        <dbReference type="ChEBI" id="CHEBI:30413"/>
        <note>ligand shared with alpha subunit</note>
    </ligand>
    <ligandPart>
        <name>Fe</name>
        <dbReference type="ChEBI" id="CHEBI:18248"/>
    </ligandPart>
</feature>
<feature type="modified residue" description="N-acetylthreonine" evidence="7 8">
    <location>
        <position position="2"/>
    </location>
</feature>
<feature type="strand" evidence="28">
    <location>
        <begin position="11"/>
        <end position="13"/>
    </location>
</feature>
<feature type="helix" evidence="29">
    <location>
        <begin position="18"/>
        <end position="40"/>
    </location>
</feature>
<proteinExistence type="evidence at protein level"/>
<reference key="1">
    <citation type="journal article" date="2002" name="DNA Res.">
        <title>Complete genome structure of the thermophilic cyanobacterium Thermosynechococcus elongatus BP-1.</title>
        <authorList>
            <person name="Nakamura Y."/>
            <person name="Kaneko T."/>
            <person name="Sato S."/>
            <person name="Ikeuchi M."/>
            <person name="Katoh H."/>
            <person name="Sasamoto S."/>
            <person name="Watanabe A."/>
            <person name="Iriguchi M."/>
            <person name="Kawashima K."/>
            <person name="Kimura T."/>
            <person name="Kishida Y."/>
            <person name="Kiyokawa C."/>
            <person name="Kohara M."/>
            <person name="Matsumoto M."/>
            <person name="Matsuno A."/>
            <person name="Nakazaki N."/>
            <person name="Shimpo S."/>
            <person name="Sugimoto M."/>
            <person name="Takeuchi C."/>
            <person name="Yamada M."/>
            <person name="Tabata S."/>
        </authorList>
    </citation>
    <scope>NUCLEOTIDE SEQUENCE [LARGE SCALE GENOMIC DNA]</scope>
    <source>
        <strain>NIES-2133 / IAM M-273 / BP-1</strain>
    </source>
</reference>
<reference key="2">
    <citation type="journal article" date="2007" name="Biochim. Biophys. Acta">
        <title>Ycf12 is a core subunit in the photosystem II complex.</title>
        <authorList>
            <person name="Kashino Y."/>
            <person name="Takahashi T."/>
            <person name="Inoue-Kashino N."/>
            <person name="Ban A."/>
            <person name="Ikeda Y."/>
            <person name="Satoh K."/>
            <person name="Sugiura M."/>
        </authorList>
    </citation>
    <scope>PROTEIN SEQUENCE OF 2-16</scope>
    <scope>CLEAVAGE OF INITIATOR METHIONINE</scope>
    <scope>SUBCELLULAR LOCATION</scope>
</reference>
<reference key="3">
    <citation type="journal article" date="2004" name="Phys. Chem. Chem. Phys.">
        <title>Crystal structure of cyanobacterial photosystem II at 3.2 A resolution: a closer look at the Mn-cluster.</title>
        <authorList>
            <person name="Biesiadka J."/>
            <person name="Loll B."/>
            <person name="Kern J."/>
            <person name="Irrgang K.-D."/>
            <person name="Zouni A."/>
        </authorList>
    </citation>
    <scope>X-RAY CRYSTALLOGRAPHY (3.20 ANGSTROMS) OF 2-45 IN PHOTOSYSTEM II WITH HEME</scope>
    <scope>COFACTOR</scope>
    <scope>SUBUNIT</scope>
    <scope>SUBCELLULAR LOCATION</scope>
</reference>
<reference key="4">
    <citation type="journal article" date="2004" name="Science">
        <title>Architecture of the photosynthetic oxygen-evolving center.</title>
        <authorList>
            <person name="Ferreira K.N."/>
            <person name="Iverson T.M."/>
            <person name="Maghlaoui K."/>
            <person name="Barber J."/>
            <person name="Iwata S."/>
        </authorList>
    </citation>
    <scope>X-RAY CRYSTALLOGRAPHY (3.5 ANGSTROMS) IN PHOTOSYSTEM II WITH HEME</scope>
    <scope>COFACTOR</scope>
    <scope>SUBUNIT</scope>
    <scope>SUBCELLULAR LOCATION</scope>
</reference>
<reference key="5">
    <citation type="journal article" date="2005" name="Photosyn. Res.">
        <title>Cyanobacterial photosystem II at 3.2 A resolution -- the plastoquinone binding pockets.</title>
        <authorList>
            <person name="Kern J."/>
            <person name="Loll B."/>
            <person name="Zouni A."/>
            <person name="Saenger W."/>
            <person name="Irrgang K.D."/>
            <person name="Biesiadka J."/>
        </authorList>
    </citation>
    <scope>X-RAY CRYSTALLOGRAPHY (3.2 ANGSTROMS) IN PHOTOSYSTEM II WITH HEME</scope>
    <scope>COFACTOR</scope>
    <scope>SUBUNIT</scope>
    <scope>SUBCELLULAR LOCATION</scope>
</reference>
<reference key="6">
    <citation type="journal article" date="2005" name="Nature">
        <title>Towards complete cofactor arrangement in the 3.0 A resolution structure of photosystem II.</title>
        <authorList>
            <person name="Loll B."/>
            <person name="Kern J."/>
            <person name="Saenger W."/>
            <person name="Zouni A."/>
            <person name="Biesiadka J."/>
        </authorList>
    </citation>
    <scope>X-RAY CRYSTALLOGRAPHY (3.0 ANGSTROMS)IN PHOTOSYSTEM II WITH HEME</scope>
    <scope>COFACTOR</scope>
    <scope>SUBUNIT</scope>
    <scope>SUBCELLULAR LOCATION</scope>
    <source>
        <strain>NIES-2133 / IAM M-273 / BP-1</strain>
    </source>
</reference>
<reference key="7">
    <citation type="journal article" date="2005" name="Photosyn. Res.">
        <title>The antenna system of photosystem II from Thermosynechococcus elongatus at 3.2 A resolution.</title>
        <authorList>
            <person name="Loll B."/>
            <person name="Kern J."/>
            <person name="Zouni A."/>
            <person name="Saenger W."/>
            <person name="Biesiadka J."/>
            <person name="Irrgang K.D."/>
        </authorList>
    </citation>
    <scope>X-RAY CRYSTALLOGRAPHY (3.2 ANGSTROMS)</scope>
</reference>
<reference key="8">
    <citation type="journal article" date="2009" name="Nat. Struct. Mol. Biol.">
        <title>Cyanobacterial photosystem II at 2.9-A resolution and the role of quinones, lipids, channels and chloride.</title>
        <authorList>
            <person name="Guskov A."/>
            <person name="Kern J."/>
            <person name="Gabdulkhakov A."/>
            <person name="Broser M."/>
            <person name="Zouni A."/>
            <person name="Saenger W."/>
        </authorList>
    </citation>
    <scope>X-RAY CRYSTALLOGRAPHY (2.90 ANGSTROMS) IN PHOTOSYSTEM II WITH HEME</scope>
    <scope>FUNCTION</scope>
    <scope>COFACTOR</scope>
    <scope>SUBUNIT</scope>
    <scope>SUBCELLULAR LOCATION</scope>
    <scope>MASS SPECTROMETRY</scope>
    <scope>ACETYLATION AT THR-2</scope>
    <scope>TOPOLOGY</scope>
    <source>
        <strain>NIES-2133 / IAM M-273 / BP-1</strain>
    </source>
</reference>
<reference key="9">
    <citation type="journal article" date="2010" name="J. Biol. Chem.">
        <title>Crystal structure of monomeric photosystem II from Thermosynechococcus elongatus at 3.6 A resolution.</title>
        <authorList>
            <person name="Broser M."/>
            <person name="Gabdulkhakov A."/>
            <person name="Kern J."/>
            <person name="Guskov A."/>
            <person name="Muh F."/>
            <person name="Saenger W."/>
            <person name="Zouni A."/>
        </authorList>
    </citation>
    <scope>X-RAY CRYSTALLOGRAPHY (3.60 ANGSTROMS) OF 2-45 IN PHOTOSYSTEM II WITH HEME</scope>
    <scope>FUNCTION</scope>
    <scope>COFACTOR</scope>
    <scope>SUBUNIT</scope>
    <scope>SUBCELLULAR LOCATION</scope>
    <scope>ACETYLATION AT THR-2</scope>
    <scope>MASS SPECTROMETRY</scope>
    <source>
        <strain>NIES-2133 / IAM M-273 / BP-1</strain>
    </source>
</reference>
<reference key="10">
    <citation type="journal article" date="2011" name="J. Biol. Chem.">
        <title>Structural basis of cyanobacterial photosystem II inhibition by the herbicide terbutryn.</title>
        <authorList>
            <person name="Broser M."/>
            <person name="Glockner C."/>
            <person name="Gabdulkhakov A."/>
            <person name="Guskov A."/>
            <person name="Buchta J."/>
            <person name="Kern J."/>
            <person name="Muh F."/>
            <person name="Dau H."/>
            <person name="Saenger W."/>
            <person name="Zouni A."/>
        </authorList>
    </citation>
    <scope>X-RAY CRYSTALLOGRAPHY (3.20 ANGSTROMS) IN PHOTOSYSTEM II WITH HEME</scope>
    <scope>FUNCTION</scope>
    <scope>COFACTOR</scope>
    <scope>SUBUNIT</scope>
    <scope>SUBCELLULAR LOCATION</scope>
</reference>
<reference key="11">
    <citation type="journal article" date="2012" name="Proc. Natl. Acad. Sci. U.S.A.">
        <title>Room temperature femtosecond X-ray diffraction of photosystem II microcrystals.</title>
        <authorList>
            <person name="Kern J."/>
            <person name="Alonso-Mori R."/>
            <person name="Hellmich J."/>
            <person name="Tran R."/>
            <person name="Hattne J."/>
            <person name="Laksmono H."/>
            <person name="Glockner C."/>
            <person name="Echols N."/>
            <person name="Sierra R.G."/>
            <person name="Sellberg J."/>
            <person name="Lassalle-Kaiser B."/>
            <person name="Gildea R.J."/>
            <person name="Glatzel P."/>
            <person name="Grosse-Kunstleve R.W."/>
            <person name="Latimer M.J."/>
            <person name="McQueen T.A."/>
            <person name="DiFiore D."/>
            <person name="Fry A.R."/>
            <person name="Messerschmidt M."/>
            <person name="Miahnahri A."/>
            <person name="Schafer D.W."/>
            <person name="Seibert M.M."/>
            <person name="Sokaras D."/>
            <person name="Weng T.C."/>
            <person name="Zwart P.H."/>
            <person name="White W.E."/>
            <person name="Adams P.D."/>
            <person name="Bogan M.J."/>
            <person name="Boutet S."/>
            <person name="Williams G.J."/>
            <person name="Messinger J."/>
            <person name="Sauter N.K."/>
            <person name="Zouni A."/>
            <person name="Bergmann U."/>
            <person name="Yano J."/>
            <person name="Yachandra V.K."/>
        </authorList>
    </citation>
    <scope>X-RAY CRYSTALLOGRAPHY (6.56 ANGSTROMS) OF 2-45 IN PHOTOSYSTEM II WITH HEME</scope>
    <scope>COFACTOR</scope>
    <scope>SUBUNIT</scope>
    <scope>SUBCELLULAR LOCATION</scope>
    <source>
        <strain>NIES-2133 / IAM M-273 / BP-1</strain>
    </source>
</reference>
<reference key="12">
    <citation type="journal article" date="2013" name="Science">
        <title>Simultaneous femtosecond X-ray spectroscopy and diffraction of photosystem II at room temperature.</title>
        <authorList>
            <person name="Kern J."/>
            <person name="Alonso-Mori R."/>
            <person name="Tran R."/>
            <person name="Hattne J."/>
            <person name="Gildea R.J."/>
            <person name="Echols N."/>
            <person name="Glockner C."/>
            <person name="Hellmich J."/>
            <person name="Laksmono H."/>
            <person name="Sierra R.G."/>
            <person name="Lassalle-Kaiser B."/>
            <person name="Koroidov S."/>
            <person name="Lampe A."/>
            <person name="Han G."/>
            <person name="Gul S."/>
            <person name="Difiore D."/>
            <person name="Milathianaki D."/>
            <person name="Fry A.R."/>
            <person name="Miahnahri A."/>
            <person name="Schafer D.W."/>
            <person name="Messerschmidt M."/>
            <person name="Seibert M.M."/>
            <person name="Koglin J.E."/>
            <person name="Sokaras D."/>
            <person name="Weng T.C."/>
            <person name="Sellberg J."/>
            <person name="Latimer M.J."/>
            <person name="Grosse-Kunstleve R.W."/>
            <person name="Zwart P.H."/>
            <person name="White W.E."/>
            <person name="Glatzel P."/>
            <person name="Adams P.D."/>
            <person name="Bogan M.J."/>
            <person name="Williams G.J."/>
            <person name="Boutet S."/>
            <person name="Messinger J."/>
            <person name="Zouni A."/>
            <person name="Sauter N.K."/>
            <person name="Yachandra V.K."/>
            <person name="Bergmann U."/>
            <person name="Yano J."/>
        </authorList>
    </citation>
    <scope>X-RAY CRYSTALLOGRAPHY (5.70 ANGSTROMS) IN PHOTOSYSTEM II WITH HEME</scope>
    <scope>COFACTOR</scope>
    <scope>SUBUNIT</scope>
    <scope>SUBCELLULAR LOCATION</scope>
    <source>
        <strain>NIES-2133 / IAM M-273 / BP-1</strain>
    </source>
</reference>
<reference key="13">
    <citation type="journal article" date="2014" name="Nature">
        <title>Serial time-resolved crystallography of photosystem II using a femtosecond X-ray laser.</title>
        <authorList>
            <person name="Kupitz C."/>
            <person name="Basu S."/>
            <person name="Grotjohann I."/>
            <person name="Fromme R."/>
            <person name="Zatsepin N.A."/>
            <person name="Rendek K.N."/>
            <person name="Hunter M.S."/>
            <person name="Shoeman R.L."/>
            <person name="White T.A."/>
            <person name="Wang D."/>
            <person name="James D."/>
            <person name="Yang J.H."/>
            <person name="Cobb D.E."/>
            <person name="Reeder B."/>
            <person name="Sierra R.G."/>
            <person name="Liu H."/>
            <person name="Barty A."/>
            <person name="Aquila A.L."/>
            <person name="Deponte D."/>
            <person name="Kirian R.A."/>
            <person name="Bari S."/>
            <person name="Bergkamp J.J."/>
            <person name="Beyerlein K.R."/>
            <person name="Bogan M.J."/>
            <person name="Caleman C."/>
            <person name="Chao T.C."/>
            <person name="Conrad C.E."/>
            <person name="Davis K.M."/>
            <person name="Fleckenstein H."/>
            <person name="Galli L."/>
            <person name="Hau-Riege S.P."/>
            <person name="Kassemeyer S."/>
            <person name="Laksmono H."/>
            <person name="Liang M."/>
            <person name="Lomb L."/>
            <person name="Marchesini S."/>
            <person name="Martin A.V."/>
            <person name="Messerschmidt M."/>
            <person name="Milathianaki D."/>
            <person name="Nass K."/>
            <person name="Ros A."/>
            <person name="Roy-Chowdhury S."/>
            <person name="Schmidt K."/>
            <person name="Seibert M."/>
            <person name="Steinbrener J."/>
            <person name="Stellato F."/>
            <person name="Yan L."/>
            <person name="Yoon C."/>
            <person name="Moore T.A."/>
            <person name="Moore A.L."/>
            <person name="Pushkar Y."/>
            <person name="Williams G.J."/>
            <person name="Boutet S."/>
            <person name="Doak R.B."/>
            <person name="Weierstall U."/>
            <person name="Frank M."/>
            <person name="Chapman H.N."/>
            <person name="Spence J.C."/>
            <person name="Fromme P."/>
        </authorList>
    </citation>
    <scope>X-RAY CRYSTALLOGRAPHY (5.00 ANGSTROMS) OF 12-45 IN PHOTOSYSTEM II WITH HEME</scope>
    <scope>COFACTOR</scope>
    <scope>SUBUNIT</scope>
    <scope>SUBCELLULAR LOCATION</scope>
    <source>
        <strain>NIES-2133 / IAM M-273 / BP-1</strain>
    </source>
</reference>
<reference key="14">
    <citation type="journal article" date="2014" name="Nat. Commun.">
        <title>Taking snapshots of photosynthetic water oxidation using femtosecond X-ray diffraction and spectroscopy.</title>
        <authorList>
            <person name="Kern J."/>
            <person name="Tran R."/>
            <person name="Alonso-Mori R."/>
            <person name="Koroidov S."/>
            <person name="Echols N."/>
            <person name="Hattne J."/>
            <person name="Ibrahim M."/>
            <person name="Gul S."/>
            <person name="Laksmono H."/>
            <person name="Sierra R.G."/>
            <person name="Gildea R.J."/>
            <person name="Han G."/>
            <person name="Hellmich J."/>
            <person name="Lassalle-Kaiser B."/>
            <person name="Chatterjee R."/>
            <person name="Brewster A.S."/>
            <person name="Stan C.A."/>
            <person name="Gloeckner C."/>
            <person name="Lampe A."/>
            <person name="DiFiore D."/>
            <person name="Milathianaki D."/>
            <person name="Fry A.R."/>
            <person name="Seibert M.M."/>
            <person name="Koglin J.E."/>
            <person name="Gallo E."/>
            <person name="Uhlig J."/>
            <person name="Sokaras D."/>
            <person name="Weng T.C."/>
            <person name="Zwart P.H."/>
            <person name="Skinner D.E."/>
            <person name="Bogan M.J."/>
            <person name="Messerschmidt M."/>
            <person name="Glatzel P."/>
            <person name="Williams G.J."/>
            <person name="Boutet S."/>
            <person name="Adams P.D."/>
            <person name="Zouni A."/>
            <person name="Messinger J."/>
            <person name="Sauter N.K."/>
            <person name="Bergmann U."/>
            <person name="Yano J."/>
            <person name="Yachandra V.K."/>
        </authorList>
    </citation>
    <scope>X-RAY CRYSTALLOGRAPHY (4.50 ANGSTROMS) IN PHOTOSYSTEM II WITH HEME</scope>
    <scope>FUNCTION</scope>
    <scope>COFACTOR</scope>
    <scope>SUBUNIT</scope>
    <scope>SUBCELLULAR LOCATION</scope>
    <source>
        <strain>NIES-2133 / IAM M-273 / BP-1</strain>
    </source>
</reference>
<reference evidence="25 26 27" key="15">
    <citation type="journal article" date="2021" name="Nat. Plants">
        <title>Structural insights into photosystem II assembly.</title>
        <authorList>
            <person name="Zabret J."/>
            <person name="Bohn S."/>
            <person name="Schuller S.K."/>
            <person name="Arnolds O."/>
            <person name="Moller M."/>
            <person name="Meier-Credo J."/>
            <person name="Liauw P."/>
            <person name="Chan A."/>
            <person name="Tajkhorshid E."/>
            <person name="Langer J.D."/>
            <person name="Stoll R."/>
            <person name="Krieger-Liszkay A."/>
            <person name="Engel B.D."/>
            <person name="Rudack T."/>
            <person name="Schuller J.M."/>
            <person name="Nowaczyk M.M."/>
        </authorList>
    </citation>
    <scope>STRUCTURE BY ELECTRON MICROSCOPY (2.68 ANGSTROMS) IN PSII-I ASSEMBLY COMPLEX</scope>
    <scope>SUBUNIT</scope>
    <scope>SUBCELLULAR LOCATION</scope>
    <scope>TOPOLOGY</scope>
    <source>
        <strain>NIES-2133 / IAM M-273 / BP-1</strain>
    </source>
</reference>
<organism>
    <name type="scientific">Thermosynechococcus vestitus (strain NIES-2133 / IAM M-273 / BP-1)</name>
    <dbReference type="NCBI Taxonomy" id="197221"/>
    <lineage>
        <taxon>Bacteria</taxon>
        <taxon>Bacillati</taxon>
        <taxon>Cyanobacteriota</taxon>
        <taxon>Cyanophyceae</taxon>
        <taxon>Acaryochloridales</taxon>
        <taxon>Thermosynechococcaceae</taxon>
        <taxon>Thermosynechococcus</taxon>
    </lineage>
</organism>
<keyword id="KW-0002">3D-structure</keyword>
<keyword id="KW-0007">Acetylation</keyword>
<keyword id="KW-0903">Direct protein sequencing</keyword>
<keyword id="KW-0249">Electron transport</keyword>
<keyword id="KW-0349">Heme</keyword>
<keyword id="KW-0408">Iron</keyword>
<keyword id="KW-0472">Membrane</keyword>
<keyword id="KW-0479">Metal-binding</keyword>
<keyword id="KW-0602">Photosynthesis</keyword>
<keyword id="KW-0604">Photosystem II</keyword>
<keyword id="KW-1185">Reference proteome</keyword>
<keyword id="KW-0793">Thylakoid</keyword>
<keyword id="KW-0812">Transmembrane</keyword>
<keyword id="KW-1133">Transmembrane helix</keyword>
<keyword id="KW-0813">Transport</keyword>
<sequence>MTSNTPNQEPVSYPIFTVRWVAVHTLAVPTIFFLGAIAAMQFIQR</sequence>
<gene>
    <name evidence="1" type="primary">psbF</name>
    <name type="ordered locus">tsr1542</name>
</gene>